<organism>
    <name type="scientific">Escherichia coli O157:H7</name>
    <dbReference type="NCBI Taxonomy" id="83334"/>
    <lineage>
        <taxon>Bacteria</taxon>
        <taxon>Pseudomonadati</taxon>
        <taxon>Pseudomonadota</taxon>
        <taxon>Gammaproteobacteria</taxon>
        <taxon>Enterobacterales</taxon>
        <taxon>Enterobacteriaceae</taxon>
        <taxon>Escherichia</taxon>
    </lineage>
</organism>
<reference key="1">
    <citation type="journal article" date="2001" name="Nature">
        <title>Genome sequence of enterohaemorrhagic Escherichia coli O157:H7.</title>
        <authorList>
            <person name="Perna N.T."/>
            <person name="Plunkett G. III"/>
            <person name="Burland V."/>
            <person name="Mau B."/>
            <person name="Glasner J.D."/>
            <person name="Rose D.J."/>
            <person name="Mayhew G.F."/>
            <person name="Evans P.S."/>
            <person name="Gregor J."/>
            <person name="Kirkpatrick H.A."/>
            <person name="Posfai G."/>
            <person name="Hackett J."/>
            <person name="Klink S."/>
            <person name="Boutin A."/>
            <person name="Shao Y."/>
            <person name="Miller L."/>
            <person name="Grotbeck E.J."/>
            <person name="Davis N.W."/>
            <person name="Lim A."/>
            <person name="Dimalanta E.T."/>
            <person name="Potamousis K."/>
            <person name="Apodaca J."/>
            <person name="Anantharaman T.S."/>
            <person name="Lin J."/>
            <person name="Yen G."/>
            <person name="Schwartz D.C."/>
            <person name="Welch R.A."/>
            <person name="Blattner F.R."/>
        </authorList>
    </citation>
    <scope>NUCLEOTIDE SEQUENCE [LARGE SCALE GENOMIC DNA]</scope>
    <source>
        <strain>O157:H7 / EDL933 / ATCC 700927 / EHEC</strain>
    </source>
</reference>
<reference key="2">
    <citation type="journal article" date="2001" name="DNA Res.">
        <title>Complete genome sequence of enterohemorrhagic Escherichia coli O157:H7 and genomic comparison with a laboratory strain K-12.</title>
        <authorList>
            <person name="Hayashi T."/>
            <person name="Makino K."/>
            <person name="Ohnishi M."/>
            <person name="Kurokawa K."/>
            <person name="Ishii K."/>
            <person name="Yokoyama K."/>
            <person name="Han C.-G."/>
            <person name="Ohtsubo E."/>
            <person name="Nakayama K."/>
            <person name="Murata T."/>
            <person name="Tanaka M."/>
            <person name="Tobe T."/>
            <person name="Iida T."/>
            <person name="Takami H."/>
            <person name="Honda T."/>
            <person name="Sasakawa C."/>
            <person name="Ogasawara N."/>
            <person name="Yasunaga T."/>
            <person name="Kuhara S."/>
            <person name="Shiba T."/>
            <person name="Hattori M."/>
            <person name="Shinagawa H."/>
        </authorList>
    </citation>
    <scope>NUCLEOTIDE SEQUENCE [LARGE SCALE GENOMIC DNA]</scope>
    <source>
        <strain>O157:H7 / Sakai / RIMD 0509952 / EHEC</strain>
    </source>
</reference>
<evidence type="ECO:0000255" key="1">
    <source>
        <dbReference type="HAMAP-Rule" id="MF_01092"/>
    </source>
</evidence>
<proteinExistence type="inferred from homology"/>
<comment type="function">
    <text evidence="1">Cell division factor that enhances FtsZ-ring assembly. Directly interacts with FtsZ and promotes bundling of FtsZ protofilaments, with a reduction in FtsZ GTPase activity.</text>
</comment>
<comment type="subunit">
    <text evidence="1">Interacts with FtsZ.</text>
</comment>
<comment type="subcellular location">
    <subcellularLocation>
        <location evidence="1">Cytoplasm</location>
    </subcellularLocation>
    <text evidence="1">Localizes to mid-cell in an FtsZ-dependent manner.</text>
</comment>
<comment type="similarity">
    <text evidence="1">Belongs to the ZapD family.</text>
</comment>
<gene>
    <name evidence="1" type="primary">zapD</name>
    <name type="ordered locus">Z0112</name>
    <name type="ordered locus">ECs0106</name>
</gene>
<feature type="chain" id="PRO_0000211669" description="Cell division protein ZapD">
    <location>
        <begin position="1"/>
        <end position="247"/>
    </location>
</feature>
<name>ZAPD_ECO57</name>
<protein>
    <recommendedName>
        <fullName evidence="1">Cell division protein ZapD</fullName>
    </recommendedName>
    <alternativeName>
        <fullName evidence="1">Z ring-associated protein D</fullName>
    </alternativeName>
</protein>
<keyword id="KW-0131">Cell cycle</keyword>
<keyword id="KW-0132">Cell division</keyword>
<keyword id="KW-0963">Cytoplasm</keyword>
<keyword id="KW-1185">Reference proteome</keyword>
<keyword id="KW-0717">Septation</keyword>
<accession>Q8X988</accession>
<sequence length="247" mass="28308">MQTQVLFEHPLNEKMRTWLRIEFLIQQLTVNLPIVDHAGALHFFRNVSELLDVFERGEVRTELLKELDRQQRKLQTWIGVPGVDQSRIEALIQQLKAAGSVLISAPRIGQFLREDRLIALVRQRLSIPGGCCSFDLPTLHIWLHLPQAQRDCQVETWIASLNPLTQALTMVLDLIRQSAPFRKQTSLNGFYQDNGGDADLLRLNLSLDSQLYPQISGHKSRFAIRFMPLDTENGQVPERLDFELACC</sequence>
<dbReference type="EMBL" id="AE005174">
    <property type="protein sequence ID" value="AAG54406.1"/>
    <property type="molecule type" value="Genomic_DNA"/>
</dbReference>
<dbReference type="EMBL" id="BA000007">
    <property type="protein sequence ID" value="BAB33529.1"/>
    <property type="molecule type" value="Genomic_DNA"/>
</dbReference>
<dbReference type="PIR" id="B85493">
    <property type="entry name" value="B85493"/>
</dbReference>
<dbReference type="PIR" id="B90642">
    <property type="entry name" value="B90642"/>
</dbReference>
<dbReference type="RefSeq" id="NP_308133.1">
    <property type="nucleotide sequence ID" value="NC_002695.1"/>
</dbReference>
<dbReference type="RefSeq" id="WP_001194728.1">
    <property type="nucleotide sequence ID" value="NZ_VOAI01000002.1"/>
</dbReference>
<dbReference type="SMR" id="Q8X988"/>
<dbReference type="STRING" id="155864.Z0112"/>
<dbReference type="GeneID" id="913614"/>
<dbReference type="KEGG" id="ece:Z0112"/>
<dbReference type="KEGG" id="ecs:ECs_0106"/>
<dbReference type="PATRIC" id="fig|386585.9.peg.205"/>
<dbReference type="eggNOG" id="COG4582">
    <property type="taxonomic scope" value="Bacteria"/>
</dbReference>
<dbReference type="HOGENOM" id="CLU_076303_0_0_6"/>
<dbReference type="OMA" id="LPAYYAW"/>
<dbReference type="Proteomes" id="UP000000558">
    <property type="component" value="Chromosome"/>
</dbReference>
<dbReference type="Proteomes" id="UP000002519">
    <property type="component" value="Chromosome"/>
</dbReference>
<dbReference type="GO" id="GO:0032153">
    <property type="term" value="C:cell division site"/>
    <property type="evidence" value="ECO:0007669"/>
    <property type="project" value="TreeGrafter"/>
</dbReference>
<dbReference type="GO" id="GO:0005737">
    <property type="term" value="C:cytoplasm"/>
    <property type="evidence" value="ECO:0007669"/>
    <property type="project" value="UniProtKB-SubCell"/>
</dbReference>
<dbReference type="GO" id="GO:0000917">
    <property type="term" value="P:division septum assembly"/>
    <property type="evidence" value="ECO:0007669"/>
    <property type="project" value="UniProtKB-KW"/>
</dbReference>
<dbReference type="GO" id="GO:0043093">
    <property type="term" value="P:FtsZ-dependent cytokinesis"/>
    <property type="evidence" value="ECO:0007669"/>
    <property type="project" value="UniProtKB-UniRule"/>
</dbReference>
<dbReference type="FunFam" id="1.10.3900.10:FF:000001">
    <property type="entry name" value="Cell division protein ZapD"/>
    <property type="match status" value="1"/>
</dbReference>
<dbReference type="FunFam" id="2.60.440.10:FF:000001">
    <property type="entry name" value="Cell division protein ZapD"/>
    <property type="match status" value="1"/>
</dbReference>
<dbReference type="Gene3D" id="1.10.3900.10">
    <property type="entry name" value="YacF-like"/>
    <property type="match status" value="1"/>
</dbReference>
<dbReference type="Gene3D" id="2.60.440.10">
    <property type="entry name" value="YacF-like domains"/>
    <property type="match status" value="1"/>
</dbReference>
<dbReference type="HAMAP" id="MF_01092">
    <property type="entry name" value="ZapD"/>
    <property type="match status" value="1"/>
</dbReference>
<dbReference type="InterPro" id="IPR009777">
    <property type="entry name" value="ZapD"/>
</dbReference>
<dbReference type="InterPro" id="IPR027462">
    <property type="entry name" value="ZapD_C"/>
</dbReference>
<dbReference type="InterPro" id="IPR036268">
    <property type="entry name" value="ZapD_sf"/>
</dbReference>
<dbReference type="NCBIfam" id="NF003653">
    <property type="entry name" value="PRK05287.1-1"/>
    <property type="match status" value="1"/>
</dbReference>
<dbReference type="NCBIfam" id="NF003655">
    <property type="entry name" value="PRK05287.1-3"/>
    <property type="match status" value="1"/>
</dbReference>
<dbReference type="PANTHER" id="PTHR39455">
    <property type="entry name" value="CELL DIVISION PROTEIN ZAPD"/>
    <property type="match status" value="1"/>
</dbReference>
<dbReference type="PANTHER" id="PTHR39455:SF1">
    <property type="entry name" value="CELL DIVISION PROTEIN ZAPD"/>
    <property type="match status" value="1"/>
</dbReference>
<dbReference type="Pfam" id="PF07072">
    <property type="entry name" value="ZapD"/>
    <property type="match status" value="1"/>
</dbReference>
<dbReference type="SUPFAM" id="SSF160950">
    <property type="entry name" value="YacF-like"/>
    <property type="match status" value="1"/>
</dbReference>